<protein>
    <recommendedName>
        <fullName>Transcriptional activator HAP2</fullName>
    </recommendedName>
</protein>
<organism>
    <name type="scientific">Saccharomyces cerevisiae (strain ATCC 204508 / S288c)</name>
    <name type="common">Baker's yeast</name>
    <dbReference type="NCBI Taxonomy" id="559292"/>
    <lineage>
        <taxon>Eukaryota</taxon>
        <taxon>Fungi</taxon>
        <taxon>Dikarya</taxon>
        <taxon>Ascomycota</taxon>
        <taxon>Saccharomycotina</taxon>
        <taxon>Saccharomycetes</taxon>
        <taxon>Saccharomycetales</taxon>
        <taxon>Saccharomycetaceae</taxon>
        <taxon>Saccharomyces</taxon>
    </lineage>
</organism>
<evidence type="ECO:0000255" key="1">
    <source>
        <dbReference type="PROSITE-ProRule" id="PRU00966"/>
    </source>
</evidence>
<evidence type="ECO:0000256" key="2">
    <source>
        <dbReference type="SAM" id="MobiDB-lite"/>
    </source>
</evidence>
<evidence type="ECO:0000269" key="3">
    <source>
    </source>
</evidence>
<evidence type="ECO:0000269" key="4">
    <source>
    </source>
</evidence>
<evidence type="ECO:0000269" key="5">
    <source>
    </source>
</evidence>
<evidence type="ECO:0007744" key="6">
    <source>
    </source>
</evidence>
<evidence type="ECO:0007744" key="7">
    <source>
    </source>
</evidence>
<dbReference type="EMBL" id="M15243">
    <property type="protein sequence ID" value="AAA34663.1"/>
    <property type="molecule type" value="Genomic_DNA"/>
</dbReference>
<dbReference type="EMBL" id="Z72759">
    <property type="protein sequence ID" value="CAA96955.1"/>
    <property type="molecule type" value="Genomic_DNA"/>
</dbReference>
<dbReference type="EMBL" id="BK006941">
    <property type="protein sequence ID" value="DAA07881.1"/>
    <property type="molecule type" value="Genomic_DNA"/>
</dbReference>
<dbReference type="PIR" id="A26771">
    <property type="entry name" value="A26771"/>
</dbReference>
<dbReference type="RefSeq" id="NP_011277.1">
    <property type="nucleotide sequence ID" value="NM_001181103.1"/>
</dbReference>
<dbReference type="SMR" id="P06774"/>
<dbReference type="BioGRID" id="33002">
    <property type="interactions" value="179"/>
</dbReference>
<dbReference type="ComplexPortal" id="CPX-1830">
    <property type="entry name" value="CCAAT-binding factor complex"/>
</dbReference>
<dbReference type="DIP" id="DIP-1361N"/>
<dbReference type="FunCoup" id="P06774">
    <property type="interactions" value="1704"/>
</dbReference>
<dbReference type="IntAct" id="P06774">
    <property type="interactions" value="143"/>
</dbReference>
<dbReference type="MINT" id="P06774"/>
<dbReference type="STRING" id="4932.YGL237C"/>
<dbReference type="iPTMnet" id="P06774"/>
<dbReference type="PaxDb" id="4932-YGL237C"/>
<dbReference type="PeptideAtlas" id="P06774"/>
<dbReference type="EnsemblFungi" id="YGL237C_mRNA">
    <property type="protein sequence ID" value="YGL237C"/>
    <property type="gene ID" value="YGL237C"/>
</dbReference>
<dbReference type="GeneID" id="852614"/>
<dbReference type="KEGG" id="sce:YGL237C"/>
<dbReference type="AGR" id="SGD:S000003206"/>
<dbReference type="SGD" id="S000003206">
    <property type="gene designation" value="HAP2"/>
</dbReference>
<dbReference type="VEuPathDB" id="FungiDB:YGL237C"/>
<dbReference type="eggNOG" id="KOG1561">
    <property type="taxonomic scope" value="Eukaryota"/>
</dbReference>
<dbReference type="GeneTree" id="ENSGT00390000015714"/>
<dbReference type="HOGENOM" id="CLU_1046461_0_0_1"/>
<dbReference type="InParanoid" id="P06774"/>
<dbReference type="OMA" id="KFHPLET"/>
<dbReference type="OrthoDB" id="1097733at2759"/>
<dbReference type="BioCyc" id="YEAST:G3O-30710-MONOMER"/>
<dbReference type="BioGRID-ORCS" id="852614">
    <property type="hits" value="8 hits in 10 CRISPR screens"/>
</dbReference>
<dbReference type="PRO" id="PR:P06774"/>
<dbReference type="Proteomes" id="UP000002311">
    <property type="component" value="Chromosome VII"/>
</dbReference>
<dbReference type="RNAct" id="P06774">
    <property type="molecule type" value="protein"/>
</dbReference>
<dbReference type="GO" id="GO:0016602">
    <property type="term" value="C:CCAAT-binding factor complex"/>
    <property type="evidence" value="ECO:0000314"/>
    <property type="project" value="SGD"/>
</dbReference>
<dbReference type="GO" id="GO:0005634">
    <property type="term" value="C:nucleus"/>
    <property type="evidence" value="ECO:0007005"/>
    <property type="project" value="SGD"/>
</dbReference>
<dbReference type="GO" id="GO:0003677">
    <property type="term" value="F:DNA binding"/>
    <property type="evidence" value="ECO:0007669"/>
    <property type="project" value="UniProtKB-KW"/>
</dbReference>
<dbReference type="GO" id="GO:0000981">
    <property type="term" value="F:DNA-binding transcription factor activity, RNA polymerase II-specific"/>
    <property type="evidence" value="ECO:0000318"/>
    <property type="project" value="GO_Central"/>
</dbReference>
<dbReference type="GO" id="GO:0045944">
    <property type="term" value="P:positive regulation of transcription by RNA polymerase II"/>
    <property type="evidence" value="ECO:0000314"/>
    <property type="project" value="SGD"/>
</dbReference>
<dbReference type="GO" id="GO:0006109">
    <property type="term" value="P:regulation of carbohydrate metabolic process"/>
    <property type="evidence" value="ECO:0000303"/>
    <property type="project" value="ComplexPortal"/>
</dbReference>
<dbReference type="GO" id="GO:0043457">
    <property type="term" value="P:regulation of cellular respiration"/>
    <property type="evidence" value="ECO:0000315"/>
    <property type="project" value="SGD"/>
</dbReference>
<dbReference type="GO" id="GO:0006355">
    <property type="term" value="P:regulation of DNA-templated transcription"/>
    <property type="evidence" value="ECO:0000303"/>
    <property type="project" value="ComplexPortal"/>
</dbReference>
<dbReference type="GO" id="GO:0006357">
    <property type="term" value="P:regulation of transcription by RNA polymerase II"/>
    <property type="evidence" value="ECO:0000318"/>
    <property type="project" value="GO_Central"/>
</dbReference>
<dbReference type="Gene3D" id="6.10.250.2430">
    <property type="match status" value="1"/>
</dbReference>
<dbReference type="InterPro" id="IPR018362">
    <property type="entry name" value="CCAAT-binding_factor_CS"/>
</dbReference>
<dbReference type="InterPro" id="IPR001289">
    <property type="entry name" value="NFYA"/>
</dbReference>
<dbReference type="PANTHER" id="PTHR12632">
    <property type="entry name" value="TRANSCRIPTION FACTOR NF-Y ALPHA-RELATED"/>
    <property type="match status" value="1"/>
</dbReference>
<dbReference type="Pfam" id="PF02045">
    <property type="entry name" value="CBFB_NFYA"/>
    <property type="match status" value="1"/>
</dbReference>
<dbReference type="PRINTS" id="PR00616">
    <property type="entry name" value="CCAATSUBUNTB"/>
</dbReference>
<dbReference type="SMART" id="SM00521">
    <property type="entry name" value="CBF"/>
    <property type="match status" value="1"/>
</dbReference>
<dbReference type="PROSITE" id="PS00686">
    <property type="entry name" value="NFYA_HAP2_1"/>
    <property type="match status" value="1"/>
</dbReference>
<dbReference type="PROSITE" id="PS51152">
    <property type="entry name" value="NFYA_HAP2_2"/>
    <property type="match status" value="1"/>
</dbReference>
<feature type="initiator methionine" description="Removed" evidence="7">
    <location>
        <position position="1"/>
    </location>
</feature>
<feature type="chain" id="PRO_0000198781" description="Transcriptional activator HAP2">
    <location>
        <begin position="2"/>
        <end position="265"/>
    </location>
</feature>
<feature type="DNA-binding region" description="NFYA/HAP2-type" evidence="1">
    <location>
        <begin position="192"/>
        <end position="217"/>
    </location>
</feature>
<feature type="region of interest" description="Disordered" evidence="2">
    <location>
        <begin position="1"/>
        <end position="64"/>
    </location>
</feature>
<feature type="region of interest" description="Interaction with the HAP2-HAP3-HAP5 heteromer">
    <location>
        <begin position="23"/>
        <end position="180"/>
    </location>
</feature>
<feature type="region of interest" description="Disordered" evidence="2">
    <location>
        <begin position="78"/>
        <end position="129"/>
    </location>
</feature>
<feature type="region of interest" description="Disordered" evidence="2">
    <location>
        <begin position="220"/>
        <end position="265"/>
    </location>
</feature>
<feature type="short sequence motif" description="Subunit association domain (SAD)">
    <location>
        <begin position="162"/>
        <end position="185"/>
    </location>
</feature>
<feature type="compositionally biased region" description="Basic and acidic residues" evidence="2">
    <location>
        <begin position="1"/>
        <end position="14"/>
    </location>
</feature>
<feature type="compositionally biased region" description="Low complexity" evidence="2">
    <location>
        <begin position="21"/>
        <end position="31"/>
    </location>
</feature>
<feature type="compositionally biased region" description="Low complexity" evidence="2">
    <location>
        <begin position="86"/>
        <end position="98"/>
    </location>
</feature>
<feature type="compositionally biased region" description="Low complexity" evidence="2">
    <location>
        <begin position="120"/>
        <end position="129"/>
    </location>
</feature>
<feature type="compositionally biased region" description="Low complexity" evidence="2">
    <location>
        <begin position="254"/>
        <end position="265"/>
    </location>
</feature>
<feature type="modified residue" description="N-acetylserine" evidence="7">
    <location>
        <position position="2"/>
    </location>
</feature>
<feature type="modified residue" description="Phosphoserine" evidence="6">
    <location>
        <position position="52"/>
    </location>
</feature>
<feature type="modified residue" description="Phosphothreonine" evidence="6">
    <location>
        <position position="265"/>
    </location>
</feature>
<feature type="mutagenesis site" description="Favors CCACC binding over CCAAT." evidence="5">
    <original>R</original>
    <variation>L</variation>
    <location>
        <position position="199"/>
    </location>
</feature>
<reference key="1">
    <citation type="journal article" date="1987" name="Mol. Cell. Biol.">
        <title>Sequence and nuclear localization of the Saccharomyces cerevisiae HAP2 protein, a transcriptional activator.</title>
        <authorList>
            <person name="Pinkham J.L."/>
            <person name="Olesen J.T."/>
            <person name="Guarente L.P."/>
        </authorList>
    </citation>
    <scope>NUCLEOTIDE SEQUENCE [GENOMIC DNA]</scope>
</reference>
<reference key="2">
    <citation type="journal article" date="1997" name="Nature">
        <title>The nucleotide sequence of Saccharomyces cerevisiae chromosome VII.</title>
        <authorList>
            <person name="Tettelin H."/>
            <person name="Agostoni-Carbone M.L."/>
            <person name="Albermann K."/>
            <person name="Albers M."/>
            <person name="Arroyo J."/>
            <person name="Backes U."/>
            <person name="Barreiros T."/>
            <person name="Bertani I."/>
            <person name="Bjourson A.J."/>
            <person name="Brueckner M."/>
            <person name="Bruschi C.V."/>
            <person name="Carignani G."/>
            <person name="Castagnoli L."/>
            <person name="Cerdan E."/>
            <person name="Clemente M.L."/>
            <person name="Coblenz A."/>
            <person name="Coglievina M."/>
            <person name="Coissac E."/>
            <person name="Defoor E."/>
            <person name="Del Bino S."/>
            <person name="Delius H."/>
            <person name="Delneri D."/>
            <person name="de Wergifosse P."/>
            <person name="Dujon B."/>
            <person name="Durand P."/>
            <person name="Entian K.-D."/>
            <person name="Eraso P."/>
            <person name="Escribano V."/>
            <person name="Fabiani L."/>
            <person name="Fartmann B."/>
            <person name="Feroli F."/>
            <person name="Feuermann M."/>
            <person name="Frontali L."/>
            <person name="Garcia-Gonzalez M."/>
            <person name="Garcia-Saez M.I."/>
            <person name="Goffeau A."/>
            <person name="Guerreiro P."/>
            <person name="Hani J."/>
            <person name="Hansen M."/>
            <person name="Hebling U."/>
            <person name="Hernandez K."/>
            <person name="Heumann K."/>
            <person name="Hilger F."/>
            <person name="Hofmann B."/>
            <person name="Indge K.J."/>
            <person name="James C.M."/>
            <person name="Klima R."/>
            <person name="Koetter P."/>
            <person name="Kramer B."/>
            <person name="Kramer W."/>
            <person name="Lauquin G."/>
            <person name="Leuther H."/>
            <person name="Louis E.J."/>
            <person name="Maillier E."/>
            <person name="Marconi A."/>
            <person name="Martegani E."/>
            <person name="Mazon M.J."/>
            <person name="Mazzoni C."/>
            <person name="McReynolds A.D.K."/>
            <person name="Melchioretto P."/>
            <person name="Mewes H.-W."/>
            <person name="Minenkova O."/>
            <person name="Mueller-Auer S."/>
            <person name="Nawrocki A."/>
            <person name="Netter P."/>
            <person name="Neu R."/>
            <person name="Nombela C."/>
            <person name="Oliver S.G."/>
            <person name="Panzeri L."/>
            <person name="Paoluzi S."/>
            <person name="Plevani P."/>
            <person name="Portetelle D."/>
            <person name="Portillo F."/>
            <person name="Potier S."/>
            <person name="Purnelle B."/>
            <person name="Rieger M."/>
            <person name="Riles L."/>
            <person name="Rinaldi T."/>
            <person name="Robben J."/>
            <person name="Rodrigues-Pousada C."/>
            <person name="Rodriguez-Belmonte E."/>
            <person name="Rodriguez-Torres A.M."/>
            <person name="Rose M."/>
            <person name="Ruzzi M."/>
            <person name="Saliola M."/>
            <person name="Sanchez-Perez M."/>
            <person name="Schaefer B."/>
            <person name="Schaefer M."/>
            <person name="Scharfe M."/>
            <person name="Schmidheini T."/>
            <person name="Schreer A."/>
            <person name="Skala J."/>
            <person name="Souciet J.-L."/>
            <person name="Steensma H.Y."/>
            <person name="Talla E."/>
            <person name="Thierry A."/>
            <person name="Vandenbol M."/>
            <person name="van der Aart Q.J.M."/>
            <person name="Van Dyck L."/>
            <person name="Vanoni M."/>
            <person name="Verhasselt P."/>
            <person name="Voet M."/>
            <person name="Volckaert G."/>
            <person name="Wambutt R."/>
            <person name="Watson M.D."/>
            <person name="Weber N."/>
            <person name="Wedler E."/>
            <person name="Wedler H."/>
            <person name="Wipfli P."/>
            <person name="Wolf K."/>
            <person name="Wright L.F."/>
            <person name="Zaccaria P."/>
            <person name="Zimmermann M."/>
            <person name="Zollner A."/>
            <person name="Kleine K."/>
        </authorList>
    </citation>
    <scope>NUCLEOTIDE SEQUENCE [LARGE SCALE GENOMIC DNA]</scope>
    <source>
        <strain>ATCC 204508 / S288c</strain>
    </source>
</reference>
<reference key="3">
    <citation type="journal article" date="2014" name="G3 (Bethesda)">
        <title>The reference genome sequence of Saccharomyces cerevisiae: Then and now.</title>
        <authorList>
            <person name="Engel S.R."/>
            <person name="Dietrich F.S."/>
            <person name="Fisk D.G."/>
            <person name="Binkley G."/>
            <person name="Balakrishnan R."/>
            <person name="Costanzo M.C."/>
            <person name="Dwight S.S."/>
            <person name="Hitz B.C."/>
            <person name="Karra K."/>
            <person name="Nash R.S."/>
            <person name="Weng S."/>
            <person name="Wong E.D."/>
            <person name="Lloyd P."/>
            <person name="Skrzypek M.S."/>
            <person name="Miyasato S.R."/>
            <person name="Simison M."/>
            <person name="Cherry J.M."/>
        </authorList>
    </citation>
    <scope>GENOME REANNOTATION</scope>
    <source>
        <strain>ATCC 204508 / S288c</strain>
    </source>
</reference>
<reference key="4">
    <citation type="journal article" date="1993" name="EMBO J.">
        <title>Mutations in yeast HAP2/HAP3 define a hybrid CCAAT box binding domain.</title>
        <authorList>
            <person name="Xing Y."/>
            <person name="Fikes J.D."/>
            <person name="Guarente L."/>
        </authorList>
    </citation>
    <scope>MUTAGENESIS</scope>
</reference>
<reference key="5">
    <citation type="journal article" date="2001" name="J. Biol. Chem.">
        <title>A multiprotein complex that interacts with RNA polymerase II elongator.</title>
        <authorList>
            <person name="Li Y."/>
            <person name="Takagi Y."/>
            <person name="Jiang Y."/>
            <person name="Tokunaga M."/>
            <person name="Erdjument-Bromage H."/>
            <person name="Tempst P."/>
            <person name="Kornberg R.D."/>
        </authorList>
    </citation>
    <scope>IDENTIFICATION IN THE CCAT-BINDING FACTOR</scope>
</reference>
<reference key="6">
    <citation type="journal article" date="2004" name="Eukaryot. Cell">
        <title>Identification, mutational analysis, and coactivator requirements of two distinct transcriptional activation domains of the Saccharomyces cerevisiae Hap4 protein.</title>
        <authorList>
            <person name="Stebbins J.L."/>
            <person name="Triezenberg S.J."/>
        </authorList>
    </citation>
    <scope>FUNCTION</scope>
</reference>
<reference key="7">
    <citation type="journal article" date="2005" name="Eukaryot. Cell">
        <title>Assembly of the Hap2p/Hap3p/Hap4p/Hap5p-DNA complex in Saccharomyces cerevisiae.</title>
        <authorList>
            <person name="McNabb D.S."/>
            <person name="Pinto I."/>
        </authorList>
    </citation>
    <scope>ASSOCIATION WITH THE HAP2-HAP3-HAP5 HETEROMER</scope>
    <scope>ASSEMBLY OF THE CCAT-BINDING FACTOR</scope>
</reference>
<reference key="8">
    <citation type="journal article" date="2008" name="Mol. Cell. Proteomics">
        <title>A multidimensional chromatography technology for in-depth phosphoproteome analysis.</title>
        <authorList>
            <person name="Albuquerque C.P."/>
            <person name="Smolka M.B."/>
            <person name="Payne S.H."/>
            <person name="Bafna V."/>
            <person name="Eng J."/>
            <person name="Zhou H."/>
        </authorList>
    </citation>
    <scope>IDENTIFICATION BY MASS SPECTROMETRY [LARGE SCALE ANALYSIS]</scope>
</reference>
<reference key="9">
    <citation type="journal article" date="2009" name="Science">
        <title>Global analysis of Cdk1 substrate phosphorylation sites provides insights into evolution.</title>
        <authorList>
            <person name="Holt L.J."/>
            <person name="Tuch B.B."/>
            <person name="Villen J."/>
            <person name="Johnson A.D."/>
            <person name="Gygi S.P."/>
            <person name="Morgan D.O."/>
        </authorList>
    </citation>
    <scope>PHOSPHORYLATION [LARGE SCALE ANALYSIS] AT SER-52 AND THR-265</scope>
    <scope>IDENTIFICATION BY MASS SPECTROMETRY [LARGE SCALE ANALYSIS]</scope>
</reference>
<reference key="10">
    <citation type="journal article" date="2012" name="Proc. Natl. Acad. Sci. U.S.A.">
        <title>N-terminal acetylome analyses and functional insights of the N-terminal acetyltransferase NatB.</title>
        <authorList>
            <person name="Van Damme P."/>
            <person name="Lasa M."/>
            <person name="Polevoda B."/>
            <person name="Gazquez C."/>
            <person name="Elosegui-Artola A."/>
            <person name="Kim D.S."/>
            <person name="De Juan-Pardo E."/>
            <person name="Demeyer K."/>
            <person name="Hole K."/>
            <person name="Larrea E."/>
            <person name="Timmerman E."/>
            <person name="Prieto J."/>
            <person name="Arnesen T."/>
            <person name="Sherman F."/>
            <person name="Gevaert K."/>
            <person name="Aldabe R."/>
        </authorList>
    </citation>
    <scope>ACETYLATION [LARGE SCALE ANALYSIS] AT SER-2</scope>
    <scope>CLEAVAGE OF INITIATOR METHIONINE [LARGE SCALE ANALYSIS]</scope>
    <scope>IDENTIFICATION BY MASS SPECTROMETRY [LARGE SCALE ANALYSIS]</scope>
</reference>
<gene>
    <name type="primary">HAP2</name>
    <name type="ordered locus">YGL237C</name>
</gene>
<keyword id="KW-0007">Acetylation</keyword>
<keyword id="KW-0010">Activator</keyword>
<keyword id="KW-0238">DNA-binding</keyword>
<keyword id="KW-0539">Nucleus</keyword>
<keyword id="KW-0597">Phosphoprotein</keyword>
<keyword id="KW-1185">Reference proteome</keyword>
<keyword id="KW-0804">Transcription</keyword>
<keyword id="KW-0805">Transcription regulation</keyword>
<accession>P06774</accession>
<accession>D6VV97</accession>
<comment type="function">
    <text evidence="4">Acts a component of the CCAT-binding factor, which is a transcriptional activator and binds to the upstream activation site (UAS2) of the CYC1 gene and other genes involved in mitochondrial electron transport and activates their expression. Recognizes the sequence 5'-CCAAT-3'. HAP2 has primarily a structural role in the HAP complexes I and II.</text>
</comment>
<comment type="subunit">
    <text evidence="3">Component of the CCAT-binding factor (CBF or HAP complex II), which consists of one copy each of HAP2, HAP3, HAP4 and HAP5. The assembly of the HAP2-HAP3-HAP5 heteromer (HAP complex I) occurs in a one-step pathway and its binding to DNA is a prerequisite for the association of HAP4.</text>
</comment>
<comment type="interaction">
    <interactant intactId="EBI-8152">
        <id>P06774</id>
    </interactant>
    <interactant intactId="EBI-8165">
        <id>Q02516</id>
        <label>HAP5</label>
    </interactant>
    <organismsDiffer>false</organismsDiffer>
    <experiments>7</experiments>
</comment>
<comment type="subcellular location">
    <subcellularLocation>
        <location>Nucleus</location>
    </subcellularLocation>
</comment>
<comment type="similarity">
    <text evidence="1">Belongs to the NFYA/HAP2 subunit family.</text>
</comment>
<name>HAP2_YEAST</name>
<proteinExistence type="evidence at protein level"/>
<sequence length="265" mass="29867">MSADETDAKFHPLETDLQSDTAAATSTAAASRSPSLQEKPIEMPLDMGKAPSPRGEDQRVTNEEDLFLFNRLRASQNRVMDSLEPQQQSQYTSSSVSTMEPSADFTSFSAVTTLPPPPHQQQQQQQQQQQQQQLVVQAQYTQNQPNLQSDVLGTAIAEQPFYVNAKQYYRILKRRYARAKLEEKLRISRERKPYLHESRHKHAMRRPRGEGGRFLTAAEIKAMKSKKSGASDDPDDSHEDKKITTKIIQEQPHATSTAAAADKKT</sequence>